<dbReference type="EC" id="3.1.15.-" evidence="1"/>
<dbReference type="EMBL" id="AM421808">
    <property type="protein sequence ID" value="CAM09665.1"/>
    <property type="molecule type" value="Genomic_DNA"/>
</dbReference>
<dbReference type="RefSeq" id="WP_002221521.1">
    <property type="nucleotide sequence ID" value="NC_008767.1"/>
</dbReference>
<dbReference type="SMR" id="A1KS35"/>
<dbReference type="KEGG" id="nmc:NMC0355"/>
<dbReference type="HOGENOM" id="CLU_064761_2_0_4"/>
<dbReference type="Proteomes" id="UP000002286">
    <property type="component" value="Chromosome"/>
</dbReference>
<dbReference type="GO" id="GO:0005737">
    <property type="term" value="C:cytoplasm"/>
    <property type="evidence" value="ECO:0007669"/>
    <property type="project" value="UniProtKB-SubCell"/>
</dbReference>
<dbReference type="GO" id="GO:0000175">
    <property type="term" value="F:3'-5'-RNA exonuclease activity"/>
    <property type="evidence" value="ECO:0007669"/>
    <property type="project" value="InterPro"/>
</dbReference>
<dbReference type="GO" id="GO:0003676">
    <property type="term" value="F:nucleic acid binding"/>
    <property type="evidence" value="ECO:0007669"/>
    <property type="project" value="InterPro"/>
</dbReference>
<dbReference type="GO" id="GO:0006259">
    <property type="term" value="P:DNA metabolic process"/>
    <property type="evidence" value="ECO:0007669"/>
    <property type="project" value="UniProtKB-ARBA"/>
</dbReference>
<dbReference type="CDD" id="cd06135">
    <property type="entry name" value="Orn"/>
    <property type="match status" value="1"/>
</dbReference>
<dbReference type="FunFam" id="3.30.420.10:FF:000003">
    <property type="entry name" value="Oligoribonuclease"/>
    <property type="match status" value="1"/>
</dbReference>
<dbReference type="Gene3D" id="3.30.420.10">
    <property type="entry name" value="Ribonuclease H-like superfamily/Ribonuclease H"/>
    <property type="match status" value="1"/>
</dbReference>
<dbReference type="HAMAP" id="MF_00045">
    <property type="entry name" value="Oligoribonuclease"/>
    <property type="match status" value="1"/>
</dbReference>
<dbReference type="InterPro" id="IPR013520">
    <property type="entry name" value="Exonuclease_RNaseT/DNA_pol3"/>
</dbReference>
<dbReference type="InterPro" id="IPR022894">
    <property type="entry name" value="Oligoribonuclease"/>
</dbReference>
<dbReference type="InterPro" id="IPR012337">
    <property type="entry name" value="RNaseH-like_sf"/>
</dbReference>
<dbReference type="InterPro" id="IPR036397">
    <property type="entry name" value="RNaseH_sf"/>
</dbReference>
<dbReference type="NCBIfam" id="NF003765">
    <property type="entry name" value="PRK05359.1"/>
    <property type="match status" value="1"/>
</dbReference>
<dbReference type="PANTHER" id="PTHR11046">
    <property type="entry name" value="OLIGORIBONUCLEASE, MITOCHONDRIAL"/>
    <property type="match status" value="1"/>
</dbReference>
<dbReference type="PANTHER" id="PTHR11046:SF0">
    <property type="entry name" value="OLIGORIBONUCLEASE, MITOCHONDRIAL"/>
    <property type="match status" value="1"/>
</dbReference>
<dbReference type="Pfam" id="PF00929">
    <property type="entry name" value="RNase_T"/>
    <property type="match status" value="1"/>
</dbReference>
<dbReference type="SMART" id="SM00479">
    <property type="entry name" value="EXOIII"/>
    <property type="match status" value="1"/>
</dbReference>
<dbReference type="SUPFAM" id="SSF53098">
    <property type="entry name" value="Ribonuclease H-like"/>
    <property type="match status" value="1"/>
</dbReference>
<comment type="function">
    <text evidence="1">3'-to-5' exoribonuclease specific for small oligoribonucleotides.</text>
</comment>
<comment type="subcellular location">
    <subcellularLocation>
        <location evidence="1">Cytoplasm</location>
    </subcellularLocation>
</comment>
<comment type="similarity">
    <text evidence="1">Belongs to the oligoribonuclease family.</text>
</comment>
<proteinExistence type="inferred from homology"/>
<sequence>MQDKNNLCWLDMEMTGLNPETDRIIEVAMIITDSDLNVLAQSEVYAVHQSDELLDNMDEWNTATHGRTGLTQRVRESLHTEAEVEQKLLDFMSEWVPGRATPMCGNSIHQDRRFMVKYMPKLENYFHYRNLDVSTLKELAKRWNPSVAKSVVKRGSHKALDDILESIEEMRHYREHFLISAPRAEAQ</sequence>
<accession>A1KS35</accession>
<organism>
    <name type="scientific">Neisseria meningitidis serogroup C / serotype 2a (strain ATCC 700532 / DSM 15464 / FAM18)</name>
    <dbReference type="NCBI Taxonomy" id="272831"/>
    <lineage>
        <taxon>Bacteria</taxon>
        <taxon>Pseudomonadati</taxon>
        <taxon>Pseudomonadota</taxon>
        <taxon>Betaproteobacteria</taxon>
        <taxon>Neisseriales</taxon>
        <taxon>Neisseriaceae</taxon>
        <taxon>Neisseria</taxon>
    </lineage>
</organism>
<evidence type="ECO:0000255" key="1">
    <source>
        <dbReference type="HAMAP-Rule" id="MF_00045"/>
    </source>
</evidence>
<name>ORN_NEIMF</name>
<keyword id="KW-0963">Cytoplasm</keyword>
<keyword id="KW-0269">Exonuclease</keyword>
<keyword id="KW-0378">Hydrolase</keyword>
<keyword id="KW-0540">Nuclease</keyword>
<feature type="chain" id="PRO_1000004267" description="Oligoribonuclease">
    <location>
        <begin position="1"/>
        <end position="187"/>
    </location>
</feature>
<feature type="domain" description="Exonuclease" evidence="1">
    <location>
        <begin position="7"/>
        <end position="170"/>
    </location>
</feature>
<feature type="active site" evidence="1">
    <location>
        <position position="128"/>
    </location>
</feature>
<gene>
    <name evidence="1" type="primary">orn</name>
    <name type="ordered locus">NMC0355</name>
</gene>
<protein>
    <recommendedName>
        <fullName evidence="1">Oligoribonuclease</fullName>
        <ecNumber evidence="1">3.1.15.-</ecNumber>
    </recommendedName>
</protein>
<reference key="1">
    <citation type="journal article" date="2007" name="PLoS Genet.">
        <title>Meningococcal genetic variation mechanisms viewed through comparative analysis of serogroup C strain FAM18.</title>
        <authorList>
            <person name="Bentley S.D."/>
            <person name="Vernikos G.S."/>
            <person name="Snyder L.A.S."/>
            <person name="Churcher C."/>
            <person name="Arrowsmith C."/>
            <person name="Chillingworth T."/>
            <person name="Cronin A."/>
            <person name="Davis P.H."/>
            <person name="Holroyd N.E."/>
            <person name="Jagels K."/>
            <person name="Maddison M."/>
            <person name="Moule S."/>
            <person name="Rabbinowitsch E."/>
            <person name="Sharp S."/>
            <person name="Unwin L."/>
            <person name="Whitehead S."/>
            <person name="Quail M.A."/>
            <person name="Achtman M."/>
            <person name="Barrell B.G."/>
            <person name="Saunders N.J."/>
            <person name="Parkhill J."/>
        </authorList>
    </citation>
    <scope>NUCLEOTIDE SEQUENCE [LARGE SCALE GENOMIC DNA]</scope>
    <source>
        <strain>ATCC 700532 / DSM 15464 / FAM18</strain>
    </source>
</reference>